<feature type="chain" id="PRO_0000261033" description="Ribose import ATP-binding protein RbsA 1">
    <location>
        <begin position="1"/>
        <end position="510"/>
    </location>
</feature>
<feature type="domain" description="ABC transporter 1" evidence="1">
    <location>
        <begin position="20"/>
        <end position="256"/>
    </location>
</feature>
<feature type="domain" description="ABC transporter 2" evidence="1">
    <location>
        <begin position="266"/>
        <end position="510"/>
    </location>
</feature>
<feature type="binding site" evidence="1">
    <location>
        <begin position="52"/>
        <end position="59"/>
    </location>
    <ligand>
        <name>ATP</name>
        <dbReference type="ChEBI" id="CHEBI:30616"/>
    </ligand>
</feature>
<comment type="function">
    <text evidence="1">Part of the ABC transporter complex RbsABC involved in ribose import. Responsible for energy coupling to the transport system.</text>
</comment>
<comment type="catalytic activity">
    <reaction evidence="1">
        <text>D-ribose(out) + ATP + H2O = D-ribose(in) + ADP + phosphate + H(+)</text>
        <dbReference type="Rhea" id="RHEA:29903"/>
        <dbReference type="ChEBI" id="CHEBI:15377"/>
        <dbReference type="ChEBI" id="CHEBI:15378"/>
        <dbReference type="ChEBI" id="CHEBI:30616"/>
        <dbReference type="ChEBI" id="CHEBI:43474"/>
        <dbReference type="ChEBI" id="CHEBI:47013"/>
        <dbReference type="ChEBI" id="CHEBI:456216"/>
        <dbReference type="EC" id="7.5.2.7"/>
    </reaction>
</comment>
<comment type="subunit">
    <text evidence="1">The complex is composed of an ATP-binding protein (RbsA), two transmembrane proteins (RbsC) and a solute-binding protein (RbsB).</text>
</comment>
<comment type="subcellular location">
    <subcellularLocation>
        <location evidence="1">Cell inner membrane</location>
        <topology evidence="1">Peripheral membrane protein</topology>
    </subcellularLocation>
</comment>
<comment type="similarity">
    <text evidence="1">Belongs to the ABC transporter superfamily. Ribose importer (TC 3.A.1.2.1) family.</text>
</comment>
<keyword id="KW-0067">ATP-binding</keyword>
<keyword id="KW-0997">Cell inner membrane</keyword>
<keyword id="KW-1003">Cell membrane</keyword>
<keyword id="KW-0472">Membrane</keyword>
<keyword id="KW-0547">Nucleotide-binding</keyword>
<keyword id="KW-1185">Reference proteome</keyword>
<keyword id="KW-0677">Repeat</keyword>
<keyword id="KW-0762">Sugar transport</keyword>
<keyword id="KW-1278">Translocase</keyword>
<keyword id="KW-0813">Transport</keyword>
<dbReference type="EC" id="7.5.2.7" evidence="1"/>
<dbReference type="EMBL" id="AE007870">
    <property type="protein sequence ID" value="AAK89906.2"/>
    <property type="molecule type" value="Genomic_DNA"/>
</dbReference>
<dbReference type="PIR" id="AG2985">
    <property type="entry name" value="AG2985"/>
</dbReference>
<dbReference type="PIR" id="H98297">
    <property type="entry name" value="H98297"/>
</dbReference>
<dbReference type="RefSeq" id="NP_357121.2">
    <property type="nucleotide sequence ID" value="NC_003063.2"/>
</dbReference>
<dbReference type="SMR" id="Q8UA86"/>
<dbReference type="STRING" id="176299.Atu3488"/>
<dbReference type="EnsemblBacteria" id="AAK89906">
    <property type="protein sequence ID" value="AAK89906"/>
    <property type="gene ID" value="Atu3488"/>
</dbReference>
<dbReference type="KEGG" id="atu:Atu3488"/>
<dbReference type="PATRIC" id="fig|176299.10.peg.3327"/>
<dbReference type="eggNOG" id="COG1129">
    <property type="taxonomic scope" value="Bacteria"/>
</dbReference>
<dbReference type="HOGENOM" id="CLU_000604_92_3_5"/>
<dbReference type="OrthoDB" id="9805029at2"/>
<dbReference type="PhylomeDB" id="Q8UA86"/>
<dbReference type="BioCyc" id="AGRO:ATU3488-MONOMER"/>
<dbReference type="Proteomes" id="UP000000813">
    <property type="component" value="Chromosome linear"/>
</dbReference>
<dbReference type="GO" id="GO:0005886">
    <property type="term" value="C:plasma membrane"/>
    <property type="evidence" value="ECO:0007669"/>
    <property type="project" value="UniProtKB-SubCell"/>
</dbReference>
<dbReference type="GO" id="GO:0015611">
    <property type="term" value="F:ABC-type D-ribose transporter activity"/>
    <property type="evidence" value="ECO:0007669"/>
    <property type="project" value="UniProtKB-EC"/>
</dbReference>
<dbReference type="GO" id="GO:0005524">
    <property type="term" value="F:ATP binding"/>
    <property type="evidence" value="ECO:0007669"/>
    <property type="project" value="UniProtKB-KW"/>
</dbReference>
<dbReference type="GO" id="GO:0016887">
    <property type="term" value="F:ATP hydrolysis activity"/>
    <property type="evidence" value="ECO:0007669"/>
    <property type="project" value="InterPro"/>
</dbReference>
<dbReference type="CDD" id="cd03216">
    <property type="entry name" value="ABC_Carb_Monos_I"/>
    <property type="match status" value="1"/>
</dbReference>
<dbReference type="CDD" id="cd03215">
    <property type="entry name" value="ABC_Carb_Monos_II"/>
    <property type="match status" value="1"/>
</dbReference>
<dbReference type="FunFam" id="3.40.50.300:FF:000127">
    <property type="entry name" value="Ribose import ATP-binding protein RbsA"/>
    <property type="match status" value="1"/>
</dbReference>
<dbReference type="Gene3D" id="3.40.50.300">
    <property type="entry name" value="P-loop containing nucleotide triphosphate hydrolases"/>
    <property type="match status" value="2"/>
</dbReference>
<dbReference type="InterPro" id="IPR003593">
    <property type="entry name" value="AAA+_ATPase"/>
</dbReference>
<dbReference type="InterPro" id="IPR050107">
    <property type="entry name" value="ABC_carbohydrate_import_ATPase"/>
</dbReference>
<dbReference type="InterPro" id="IPR003439">
    <property type="entry name" value="ABC_transporter-like_ATP-bd"/>
</dbReference>
<dbReference type="InterPro" id="IPR017871">
    <property type="entry name" value="ABC_transporter-like_CS"/>
</dbReference>
<dbReference type="InterPro" id="IPR027417">
    <property type="entry name" value="P-loop_NTPase"/>
</dbReference>
<dbReference type="PANTHER" id="PTHR43790">
    <property type="entry name" value="CARBOHYDRATE TRANSPORT ATP-BINDING PROTEIN MG119-RELATED"/>
    <property type="match status" value="1"/>
</dbReference>
<dbReference type="PANTHER" id="PTHR43790:SF3">
    <property type="entry name" value="D-ALLOSE IMPORT ATP-BINDING PROTEIN ALSA-RELATED"/>
    <property type="match status" value="1"/>
</dbReference>
<dbReference type="Pfam" id="PF00005">
    <property type="entry name" value="ABC_tran"/>
    <property type="match status" value="2"/>
</dbReference>
<dbReference type="SMART" id="SM00382">
    <property type="entry name" value="AAA"/>
    <property type="match status" value="2"/>
</dbReference>
<dbReference type="SUPFAM" id="SSF52540">
    <property type="entry name" value="P-loop containing nucleoside triphosphate hydrolases"/>
    <property type="match status" value="2"/>
</dbReference>
<dbReference type="PROSITE" id="PS00211">
    <property type="entry name" value="ABC_TRANSPORTER_1"/>
    <property type="match status" value="1"/>
</dbReference>
<dbReference type="PROSITE" id="PS50893">
    <property type="entry name" value="ABC_TRANSPORTER_2"/>
    <property type="match status" value="2"/>
</dbReference>
<dbReference type="PROSITE" id="PS51254">
    <property type="entry name" value="RBSA"/>
    <property type="match status" value="1"/>
</dbReference>
<reference key="1">
    <citation type="journal article" date="2001" name="Science">
        <title>The genome of the natural genetic engineer Agrobacterium tumefaciens C58.</title>
        <authorList>
            <person name="Wood D.W."/>
            <person name="Setubal J.C."/>
            <person name="Kaul R."/>
            <person name="Monks D.E."/>
            <person name="Kitajima J.P."/>
            <person name="Okura V.K."/>
            <person name="Zhou Y."/>
            <person name="Chen L."/>
            <person name="Wood G.E."/>
            <person name="Almeida N.F. Jr."/>
            <person name="Woo L."/>
            <person name="Chen Y."/>
            <person name="Paulsen I.T."/>
            <person name="Eisen J.A."/>
            <person name="Karp P.D."/>
            <person name="Bovee D. Sr."/>
            <person name="Chapman P."/>
            <person name="Clendenning J."/>
            <person name="Deatherage G."/>
            <person name="Gillet W."/>
            <person name="Grant C."/>
            <person name="Kutyavin T."/>
            <person name="Levy R."/>
            <person name="Li M.-J."/>
            <person name="McClelland E."/>
            <person name="Palmieri A."/>
            <person name="Raymond C."/>
            <person name="Rouse G."/>
            <person name="Saenphimmachak C."/>
            <person name="Wu Z."/>
            <person name="Romero P."/>
            <person name="Gordon D."/>
            <person name="Zhang S."/>
            <person name="Yoo H."/>
            <person name="Tao Y."/>
            <person name="Biddle P."/>
            <person name="Jung M."/>
            <person name="Krespan W."/>
            <person name="Perry M."/>
            <person name="Gordon-Kamm B."/>
            <person name="Liao L."/>
            <person name="Kim S."/>
            <person name="Hendrick C."/>
            <person name="Zhao Z.-Y."/>
            <person name="Dolan M."/>
            <person name="Chumley F."/>
            <person name="Tingey S.V."/>
            <person name="Tomb J.-F."/>
            <person name="Gordon M.P."/>
            <person name="Olson M.V."/>
            <person name="Nester E.W."/>
        </authorList>
    </citation>
    <scope>NUCLEOTIDE SEQUENCE [LARGE SCALE GENOMIC DNA]</scope>
    <source>
        <strain>C58 / ATCC 33970</strain>
    </source>
</reference>
<reference key="2">
    <citation type="journal article" date="2001" name="Science">
        <title>Genome sequence of the plant pathogen and biotechnology agent Agrobacterium tumefaciens C58.</title>
        <authorList>
            <person name="Goodner B."/>
            <person name="Hinkle G."/>
            <person name="Gattung S."/>
            <person name="Miller N."/>
            <person name="Blanchard M."/>
            <person name="Qurollo B."/>
            <person name="Goldman B.S."/>
            <person name="Cao Y."/>
            <person name="Askenazi M."/>
            <person name="Halling C."/>
            <person name="Mullin L."/>
            <person name="Houmiel K."/>
            <person name="Gordon J."/>
            <person name="Vaudin M."/>
            <person name="Iartchouk O."/>
            <person name="Epp A."/>
            <person name="Liu F."/>
            <person name="Wollam C."/>
            <person name="Allinger M."/>
            <person name="Doughty D."/>
            <person name="Scott C."/>
            <person name="Lappas C."/>
            <person name="Markelz B."/>
            <person name="Flanagan C."/>
            <person name="Crowell C."/>
            <person name="Gurson J."/>
            <person name="Lomo C."/>
            <person name="Sear C."/>
            <person name="Strub G."/>
            <person name="Cielo C."/>
            <person name="Slater S."/>
        </authorList>
    </citation>
    <scope>NUCLEOTIDE SEQUENCE [LARGE SCALE GENOMIC DNA]</scope>
    <source>
        <strain>C58 / ATCC 33970</strain>
    </source>
</reference>
<organism>
    <name type="scientific">Agrobacterium fabrum (strain C58 / ATCC 33970)</name>
    <name type="common">Agrobacterium tumefaciens (strain C58)</name>
    <dbReference type="NCBI Taxonomy" id="176299"/>
    <lineage>
        <taxon>Bacteria</taxon>
        <taxon>Pseudomonadati</taxon>
        <taxon>Pseudomonadota</taxon>
        <taxon>Alphaproteobacteria</taxon>
        <taxon>Hyphomicrobiales</taxon>
        <taxon>Rhizobiaceae</taxon>
        <taxon>Rhizobium/Agrobacterium group</taxon>
        <taxon>Agrobacterium</taxon>
        <taxon>Agrobacterium tumefaciens complex</taxon>
    </lineage>
</organism>
<gene>
    <name evidence="1" type="primary">rbsA1</name>
    <name type="ordered locus">Atu3488</name>
    <name type="ORF">AGR_L_2683</name>
</gene>
<evidence type="ECO:0000255" key="1">
    <source>
        <dbReference type="HAMAP-Rule" id="MF_01716"/>
    </source>
</evidence>
<sequence>MRAETQTIKMTEASSPTPVLEMRGISQIFPGVKALDGVDIALYPGKVTALIGENGAGKSTLVKILTGIYRPNEGEILLDGKAVHFHSAQDAIDAGVTAIHQETVLFDELSVGENIFLGHAPKGRFGLIDWKTINERARILLEQLESTIDPTIRLKDLSIAQRHLVAIARALSVEARIVIMDEPTAALSRKEIDDLFRIVENLKRQGKAILFISHKFDEVYEIAENYAVFRDGKMVGAGTLATTPQDEIVRLMVGRDVTNAFPKQAVTLGPTVLSVRDYSHQTEFRDISLDLRKGEILGLYGLIGAGRSELCQSLFGITRPASGEVTLDGQPLTIRSPEDAIRAGIVYVPEERGRHGLALDMPIYQNMSLPSLTRTSRKGFLTAANEFALARKYAARLDLRAAALSVPVGTLSGGNQQKVVIGKWLATKPKVIILDEPTKGIDIGSKAAVHGFISELAAEGLSIIMISSELPEILGMSDRAIVMREGLMAGQFERAEFSPEKLVRAATGNA</sequence>
<protein>
    <recommendedName>
        <fullName evidence="1">Ribose import ATP-binding protein RbsA 1</fullName>
        <ecNumber evidence="1">7.5.2.7</ecNumber>
    </recommendedName>
</protein>
<accession>Q8UA86</accession>
<accession>Q7CSL2</accession>
<proteinExistence type="inferred from homology"/>
<name>RBSA1_AGRFC</name>